<organism>
    <name type="scientific">Rattus norvegicus</name>
    <name type="common">Rat</name>
    <dbReference type="NCBI Taxonomy" id="10116"/>
    <lineage>
        <taxon>Eukaryota</taxon>
        <taxon>Metazoa</taxon>
        <taxon>Chordata</taxon>
        <taxon>Craniata</taxon>
        <taxon>Vertebrata</taxon>
        <taxon>Euteleostomi</taxon>
        <taxon>Mammalia</taxon>
        <taxon>Eutheria</taxon>
        <taxon>Euarchontoglires</taxon>
        <taxon>Glires</taxon>
        <taxon>Rodentia</taxon>
        <taxon>Myomorpha</taxon>
        <taxon>Muroidea</taxon>
        <taxon>Muridae</taxon>
        <taxon>Murinae</taxon>
        <taxon>Rattus</taxon>
    </lineage>
</organism>
<protein>
    <recommendedName>
        <fullName evidence="5">ADP-ribose glycohydrolase MACROD1</fullName>
    </recommendedName>
    <alternativeName>
        <fullName>MACRO domain-containing protein 1</fullName>
    </alternativeName>
    <alternativeName>
        <fullName>O-acetyl-ADP-ribose deacetylase MACROD1</fullName>
        <ecNumber evidence="3">3.1.1.106</ecNumber>
    </alternativeName>
    <alternativeName>
        <fullName>Protein LRP16</fullName>
    </alternativeName>
    <alternativeName>
        <fullName evidence="5">[Protein ADP-ribosylaspartate] hydrolase MACROD1</fullName>
        <ecNumber evidence="3">3.2.2.-</ecNumber>
    </alternativeName>
    <alternativeName>
        <fullName evidence="5">[Protein ADP-ribosylglutamate] hydrolase MACROD1</fullName>
        <ecNumber evidence="3">3.2.2.-</ecNumber>
    </alternativeName>
</protein>
<accession>Q8K4G6</accession>
<sequence length="258" mass="28643">AAGRGAWVRTWAPLAMAAKVDLSTSTDWKEAKSFLKGLSDKQREEHYFCKDFIKLKKIPMWKETAKGLAGKVENPKYKKDKQLNEKISLFRGDITKLEVDAIVNAANNSLLGGGGVDGCIHRAAGSLLTDECRTLQNCETGKAKITCGYRLPAKHVIHTVGPIAVGQPTASQAAELRSCYLSSLDLLLEHRLRSVAFPCISTGVFGYPNEEAAEVVLATLREWLEQHKDKVDRLIICVFLEKDEGIYQERLPHYFPVA</sequence>
<name>MACD1_RAT</name>
<evidence type="ECO:0000250" key="1">
    <source>
        <dbReference type="UniProtKB" id="A1Z1Q3"/>
    </source>
</evidence>
<evidence type="ECO:0000250" key="2">
    <source>
        <dbReference type="UniProtKB" id="Q922B1"/>
    </source>
</evidence>
<evidence type="ECO:0000250" key="3">
    <source>
        <dbReference type="UniProtKB" id="Q9BQ69"/>
    </source>
</evidence>
<evidence type="ECO:0000255" key="4">
    <source>
        <dbReference type="PROSITE-ProRule" id="PRU00490"/>
    </source>
</evidence>
<evidence type="ECO:0000305" key="5"/>
<dbReference type="EC" id="3.1.1.106" evidence="3"/>
<dbReference type="EC" id="3.2.2.-" evidence="3"/>
<dbReference type="EMBL" id="AF404762">
    <property type="protein sequence ID" value="AAM45760.1"/>
    <property type="status" value="ALT_INIT"/>
    <property type="molecule type" value="mRNA"/>
</dbReference>
<dbReference type="RefSeq" id="NP_647553.1">
    <property type="nucleotide sequence ID" value="NM_139337.1"/>
</dbReference>
<dbReference type="SMR" id="Q8K4G6"/>
<dbReference type="FunCoup" id="Q8K4G6">
    <property type="interactions" value="1432"/>
</dbReference>
<dbReference type="STRING" id="10116.ENSRNOP00000073401"/>
<dbReference type="iPTMnet" id="Q8K4G6"/>
<dbReference type="PhosphoSitePlus" id="Q8K4G6"/>
<dbReference type="PaxDb" id="10116-ENSRNOP00000028749"/>
<dbReference type="GeneID" id="246233"/>
<dbReference type="KEGG" id="rno:246233"/>
<dbReference type="UCSC" id="RGD:628701">
    <property type="organism name" value="rat"/>
</dbReference>
<dbReference type="AGR" id="RGD:628701"/>
<dbReference type="CTD" id="28992"/>
<dbReference type="RGD" id="628701">
    <property type="gene designation" value="Macrod1"/>
</dbReference>
<dbReference type="eggNOG" id="KOG2633">
    <property type="taxonomic scope" value="Eukaryota"/>
</dbReference>
<dbReference type="InParanoid" id="Q8K4G6"/>
<dbReference type="OrthoDB" id="6133115at2759"/>
<dbReference type="PhylomeDB" id="Q8K4G6"/>
<dbReference type="Proteomes" id="UP000002494">
    <property type="component" value="Unplaced"/>
</dbReference>
<dbReference type="GO" id="GO:0005654">
    <property type="term" value="C:nucleoplasm"/>
    <property type="evidence" value="ECO:0000318"/>
    <property type="project" value="GO_Central"/>
</dbReference>
<dbReference type="GO" id="GO:0005634">
    <property type="term" value="C:nucleus"/>
    <property type="evidence" value="ECO:0000250"/>
    <property type="project" value="UniProtKB"/>
</dbReference>
<dbReference type="GO" id="GO:0140293">
    <property type="term" value="F:ADP-ribosylglutamate hydrolase activity"/>
    <property type="evidence" value="ECO:0000250"/>
    <property type="project" value="UniProtKB"/>
</dbReference>
<dbReference type="GO" id="GO:0019213">
    <property type="term" value="F:deacetylase activity"/>
    <property type="evidence" value="ECO:0000266"/>
    <property type="project" value="RGD"/>
</dbReference>
<dbReference type="GO" id="GO:0016798">
    <property type="term" value="F:hydrolase activity, acting on glycosyl bonds"/>
    <property type="evidence" value="ECO:0000250"/>
    <property type="project" value="UniProtKB"/>
</dbReference>
<dbReference type="GO" id="GO:0061463">
    <property type="term" value="F:O-acetyl-ADP-ribose deacetylase activity"/>
    <property type="evidence" value="ECO:0007669"/>
    <property type="project" value="UniProtKB-EC"/>
</dbReference>
<dbReference type="GO" id="GO:0006974">
    <property type="term" value="P:DNA damage response"/>
    <property type="evidence" value="ECO:0000250"/>
    <property type="project" value="UniProtKB"/>
</dbReference>
<dbReference type="GO" id="GO:0140291">
    <property type="term" value="P:peptidyl-glutamate ADP-deribosylation"/>
    <property type="evidence" value="ECO:0000250"/>
    <property type="project" value="UniProtKB"/>
</dbReference>
<dbReference type="GO" id="GO:0051725">
    <property type="term" value="P:protein de-ADP-ribosylation"/>
    <property type="evidence" value="ECO:0000250"/>
    <property type="project" value="UniProtKB"/>
</dbReference>
<dbReference type="GO" id="GO:0042278">
    <property type="term" value="P:purine nucleoside metabolic process"/>
    <property type="evidence" value="ECO:0000266"/>
    <property type="project" value="RGD"/>
</dbReference>
<dbReference type="CDD" id="cd02908">
    <property type="entry name" value="Macro_OAADPr_deacetylase"/>
    <property type="match status" value="1"/>
</dbReference>
<dbReference type="FunFam" id="3.40.220.10:FF:000003">
    <property type="entry name" value="O-acetyl-ADP-ribose deacetylase MACROD2"/>
    <property type="match status" value="1"/>
</dbReference>
<dbReference type="Gene3D" id="3.40.220.10">
    <property type="entry name" value="Leucine Aminopeptidase, subunit E, domain 1"/>
    <property type="match status" value="1"/>
</dbReference>
<dbReference type="InterPro" id="IPR002589">
    <property type="entry name" value="Macro_dom"/>
</dbReference>
<dbReference type="InterPro" id="IPR043472">
    <property type="entry name" value="Macro_dom-like"/>
</dbReference>
<dbReference type="PANTHER" id="PTHR11106:SF93">
    <property type="entry name" value="ADP-RIBOSE GLYCOHYDROLASE MACROD1"/>
    <property type="match status" value="1"/>
</dbReference>
<dbReference type="PANTHER" id="PTHR11106">
    <property type="entry name" value="GANGLIOSIDE INDUCED DIFFERENTIATION ASSOCIATED PROTEIN 2-RELATED"/>
    <property type="match status" value="1"/>
</dbReference>
<dbReference type="Pfam" id="PF01661">
    <property type="entry name" value="Macro"/>
    <property type="match status" value="1"/>
</dbReference>
<dbReference type="SMART" id="SM00506">
    <property type="entry name" value="A1pp"/>
    <property type="match status" value="1"/>
</dbReference>
<dbReference type="SUPFAM" id="SSF52949">
    <property type="entry name" value="Macro domain-like"/>
    <property type="match status" value="1"/>
</dbReference>
<dbReference type="PROSITE" id="PS51154">
    <property type="entry name" value="MACRO"/>
    <property type="match status" value="1"/>
</dbReference>
<gene>
    <name type="primary">Macrod1</name>
    <name type="synonym">Lrp16</name>
</gene>
<keyword id="KW-0007">Acetylation</keyword>
<keyword id="KW-0227">DNA damage</keyword>
<keyword id="KW-0378">Hydrolase</keyword>
<keyword id="KW-1017">Isopeptide bond</keyword>
<keyword id="KW-0539">Nucleus</keyword>
<keyword id="KW-1185">Reference proteome</keyword>
<keyword id="KW-0832">Ubl conjugation</keyword>
<reference key="1">
    <citation type="submission" date="2001-08" db="EMBL/GenBank/DDBJ databases">
        <title>Rat mRNA sequence similar to LRP16 protein of humans.</title>
        <authorList>
            <person name="Zhang X."/>
            <person name="Ip N.Y."/>
        </authorList>
    </citation>
    <scope>NUCLEOTIDE SEQUENCE [MRNA]</scope>
    <source>
        <strain>Sprague-Dawley</strain>
    </source>
</reference>
<proteinExistence type="evidence at transcript level"/>
<feature type="chain" id="PRO_0000084487" description="ADP-ribose glycohydrolase MACROD1">
    <location>
        <begin position="1" status="less than"/>
        <end position="258"/>
    </location>
</feature>
<feature type="domain" description="Macro" evidence="4">
    <location>
        <begin position="74"/>
        <end position="255"/>
    </location>
</feature>
<feature type="binding site" evidence="1">
    <location>
        <begin position="92"/>
        <end position="94"/>
    </location>
    <ligand>
        <name>substrate</name>
    </ligand>
</feature>
<feature type="binding site" evidence="1">
    <location>
        <begin position="105"/>
        <end position="107"/>
    </location>
    <ligand>
        <name>substrate</name>
    </ligand>
</feature>
<feature type="binding site" evidence="1">
    <location>
        <begin position="112"/>
        <end position="117"/>
    </location>
    <ligand>
        <name>substrate</name>
    </ligand>
</feature>
<feature type="binding site" evidence="1">
    <location>
        <begin position="200"/>
        <end position="206"/>
    </location>
    <ligand>
        <name>substrate</name>
    </ligand>
</feature>
<feature type="binding site" evidence="1">
    <location>
        <position position="239"/>
    </location>
    <ligand>
        <name>substrate</name>
    </ligand>
</feature>
<feature type="modified residue" description="N6-succinyllysine" evidence="2">
    <location>
        <position position="29"/>
    </location>
</feature>
<feature type="modified residue" description="N6-succinyllysine" evidence="2">
    <location>
        <position position="36"/>
    </location>
</feature>
<feature type="modified residue" description="N6-succinyllysine" evidence="2">
    <location>
        <position position="62"/>
    </location>
</feature>
<feature type="modified residue" description="N6-acetyllysine" evidence="2">
    <location>
        <position position="96"/>
    </location>
</feature>
<feature type="cross-link" description="Glycyl lysine isopeptide (Lys-Gly) (interchain with G-Cter in SUMO2)" evidence="3">
    <location>
        <position position="71"/>
    </location>
</feature>
<feature type="non-terminal residue">
    <location>
        <position position="1"/>
    </location>
</feature>
<comment type="function">
    <text evidence="3">Removes ADP-ribose from aspartate and glutamate residues in proteins bearing a single ADP-ribose moiety. Inactive towards proteins bearing poly-ADP-ribose. Deacetylates O-acetyl-ADP ribose, a signaling molecule generated by the deacetylation of acetylated lysine residues in histones and other proteins. Plays a role in estrogen signaling. Binds to androgen receptor (AR) and amplifies the transactivation function of AR in response to androgen. May play an important role in carcinogenesis and/or progression of hormone-dependent cancers by feed-forward mechanism that activates ESR1 transactivation. Could be an ESR1 coactivator, providing a positive feedback regulatory loop for ESR1 signal transduction. Could be involved in invasive growth by down-regulating CDH1 in endometrial cancer cells. Enhances ESR1-mediated transcription activity.</text>
</comment>
<comment type="catalytic activity">
    <reaction evidence="3">
        <text>3''-O-acetyl-ADP-D-ribose + H2O = ADP-D-ribose + acetate + H(+)</text>
        <dbReference type="Rhea" id="RHEA:59244"/>
        <dbReference type="ChEBI" id="CHEBI:15377"/>
        <dbReference type="ChEBI" id="CHEBI:15378"/>
        <dbReference type="ChEBI" id="CHEBI:30089"/>
        <dbReference type="ChEBI" id="CHEBI:57967"/>
        <dbReference type="ChEBI" id="CHEBI:142723"/>
        <dbReference type="EC" id="3.1.1.106"/>
    </reaction>
</comment>
<comment type="catalytic activity">
    <reaction evidence="3">
        <text>2''-O-acetyl-ADP-D-ribose + H2O = ADP-D-ribose + acetate + H(+)</text>
        <dbReference type="Rhea" id="RHEA:57060"/>
        <dbReference type="ChEBI" id="CHEBI:15377"/>
        <dbReference type="ChEBI" id="CHEBI:15378"/>
        <dbReference type="ChEBI" id="CHEBI:30089"/>
        <dbReference type="ChEBI" id="CHEBI:57967"/>
        <dbReference type="ChEBI" id="CHEBI:83767"/>
        <dbReference type="EC" id="3.1.1.106"/>
    </reaction>
</comment>
<comment type="catalytic activity">
    <reaction evidence="3">
        <text>4-O-(ADP-D-ribosyl)-L-aspartyl-[protein] + H2O = L-aspartyl-[protein] + ADP-D-ribose + H(+)</text>
        <dbReference type="Rhea" id="RHEA:54428"/>
        <dbReference type="Rhea" id="RHEA-COMP:9867"/>
        <dbReference type="Rhea" id="RHEA-COMP:13832"/>
        <dbReference type="ChEBI" id="CHEBI:15377"/>
        <dbReference type="ChEBI" id="CHEBI:15378"/>
        <dbReference type="ChEBI" id="CHEBI:29961"/>
        <dbReference type="ChEBI" id="CHEBI:57967"/>
        <dbReference type="ChEBI" id="CHEBI:138102"/>
    </reaction>
</comment>
<comment type="catalytic activity">
    <reaction evidence="3">
        <text>5-O-(ADP-D-ribosyl)-L-glutamyl-[protein] + H2O = L-glutamyl-[protein] + ADP-D-ribose + H(+)</text>
        <dbReference type="Rhea" id="RHEA:58248"/>
        <dbReference type="Rhea" id="RHEA-COMP:10208"/>
        <dbReference type="Rhea" id="RHEA-COMP:15089"/>
        <dbReference type="ChEBI" id="CHEBI:15377"/>
        <dbReference type="ChEBI" id="CHEBI:15378"/>
        <dbReference type="ChEBI" id="CHEBI:29973"/>
        <dbReference type="ChEBI" id="CHEBI:57967"/>
        <dbReference type="ChEBI" id="CHEBI:142540"/>
    </reaction>
</comment>
<comment type="catalytic activity">
    <reaction evidence="3">
        <text>alpha-NAD(+) + H2O = ADP-D-ribose + nicotinamide + H(+)</text>
        <dbReference type="Rhea" id="RHEA:68792"/>
        <dbReference type="ChEBI" id="CHEBI:15377"/>
        <dbReference type="ChEBI" id="CHEBI:15378"/>
        <dbReference type="ChEBI" id="CHEBI:17154"/>
        <dbReference type="ChEBI" id="CHEBI:57967"/>
        <dbReference type="ChEBI" id="CHEBI:77017"/>
    </reaction>
</comment>
<comment type="activity regulation">
    <text evidence="3">Subject to competitive inhibition by the product ADP-ribose.</text>
</comment>
<comment type="subunit">
    <text evidence="3">Interacts with ESR1; Interacts in a manner that is estrogen independent but is enhanced by estrogen. Interacts (via macro domain) with AR.</text>
</comment>
<comment type="subcellular location">
    <subcellularLocation>
        <location evidence="3">Nucleus</location>
    </subcellularLocation>
    <text evidence="3">Recruited to DNA lesions, probably via mono-APD-ribosylated proteins.</text>
</comment>
<comment type="similarity">
    <text evidence="5">Belongs to the MacroD-type family. MacroD1/2-like subfamily.</text>
</comment>
<comment type="sequence caution" evidence="5">
    <conflict type="erroneous initiation">
        <sequence resource="EMBL-CDS" id="AAM45760"/>
    </conflict>
</comment>